<evidence type="ECO:0000255" key="1">
    <source>
        <dbReference type="PROSITE-ProRule" id="PRU00173"/>
    </source>
</evidence>
<evidence type="ECO:0000269" key="2">
    <source>
    </source>
</evidence>
<evidence type="ECO:0000269" key="3">
    <source>
    </source>
</evidence>
<evidence type="ECO:0000269" key="4">
    <source>
    </source>
</evidence>
<evidence type="ECO:0000269" key="5">
    <source>
    </source>
</evidence>
<evidence type="ECO:0000269" key="6">
    <source>
    </source>
</evidence>
<evidence type="ECO:0007829" key="7">
    <source>
        <dbReference type="PDB" id="2JTQ"/>
    </source>
</evidence>
<evidence type="ECO:0007829" key="8">
    <source>
        <dbReference type="PDB" id="2JTS"/>
    </source>
</evidence>
<name>PSPE_ECOLI</name>
<comment type="function">
    <text>The phage shock protein (psp) operon (pspABCDE) may play a significant role in the competition for survival under nutrient- or energy-limited conditions. PspE catalyzes the sulfur-transfer reaction from thiosulfate to cyanide, to form sulfite and thiocyanate. Also able to use dithiol (dithiothreitol) as an alternate sulfur acceptor. Also possesses a very low mercaptopyruvate sulfurtransferase activity.</text>
</comment>
<comment type="catalytic activity">
    <reaction evidence="2">
        <text>thiosulfate + hydrogen cyanide = thiocyanate + sulfite + 2 H(+)</text>
        <dbReference type="Rhea" id="RHEA:16881"/>
        <dbReference type="ChEBI" id="CHEBI:15378"/>
        <dbReference type="ChEBI" id="CHEBI:17359"/>
        <dbReference type="ChEBI" id="CHEBI:18022"/>
        <dbReference type="ChEBI" id="CHEBI:18407"/>
        <dbReference type="ChEBI" id="CHEBI:33542"/>
        <dbReference type="EC" id="2.8.1.1"/>
    </reaction>
</comment>
<comment type="activity regulation">
    <text evidence="2 5">Inhibited by thiosulfate above 100 mM, particularly at low cyanide concentrations (&lt;5 mM). Inhibited by sodium sulfate or sodium chloride at 0.25 M which gives around 50% inhibition of rhodanese activity. Addition of sodium phosphate at the same concentration results in about 65% inhibition. Sulfite strongly inhibits PspE activity (1 mM sodium sulfite resulted in more than 50% inhibition of rhodanese activity).</text>
</comment>
<comment type="biophysicochemical properties">
    <kinetics>
        <KM evidence="2 5">2.7 mM for thiosulfate (at pH 8.6 and at 25 degrees Celsius)</KM>
        <KM evidence="2 5">10 mM for dithiothreitol (at pH 8.6 and at 25 degrees Celsius)</KM>
        <KM evidence="2 5">32 mM for cyanide (at pH 8.6 and at 25 degrees Celsius)</KM>
        <Vmax evidence="2 5">410.0 umol/min/mg enzyme toward cyanide (at pH 8.6 and at 25 degrees Celsius)</Vmax>
    </kinetics>
</comment>
<comment type="subunit">
    <text evidence="4">Monomer.</text>
</comment>
<comment type="subcellular location">
    <subcellularLocation>
        <location evidence="3">Periplasm</location>
    </subcellularLocation>
</comment>
<comment type="induction">
    <text evidence="2 3 5">By heat, ethanol, osmotic shock and infection by filamentous bacteriophages. Expression is positively regulated by cyclic AMP-cAMP receptor protein (cAMP-CRP). Expressed at higher levels during growth on glycerol, acetate or proline as carbon source relative to expression during growth on glucose.</text>
</comment>
<comment type="miscellaneous">
    <text>Catalysis proceeds by a classical ping-pong bi-bi reaction mechanism, whereby a covalent enzyme-sulfur intermediate is formed on the active site cysteine.</text>
</comment>
<feature type="signal peptide" evidence="6">
    <location>
        <begin position="1"/>
        <end position="19"/>
    </location>
</feature>
<feature type="chain" id="PRO_0000030431" description="Thiosulfate sulfurtransferase PspE">
    <location>
        <begin position="20"/>
        <end position="104"/>
    </location>
</feature>
<feature type="domain" description="Rhodanese" evidence="1">
    <location>
        <begin position="20"/>
        <end position="104"/>
    </location>
</feature>
<feature type="active site" description="Cysteine persulfide intermediate">
    <location>
        <position position="67"/>
    </location>
</feature>
<feature type="site" description="May be important for providing the necessary conformational flexibility for enzymatic catalysis">
    <location>
        <position position="93"/>
    </location>
</feature>
<feature type="strand" evidence="7">
    <location>
        <begin position="21"/>
        <end position="25"/>
    </location>
</feature>
<feature type="helix" evidence="7">
    <location>
        <begin position="29"/>
        <end position="32"/>
    </location>
</feature>
<feature type="strand" evidence="7">
    <location>
        <begin position="35"/>
        <end position="37"/>
    </location>
</feature>
<feature type="strand" evidence="8">
    <location>
        <begin position="40"/>
        <end position="42"/>
    </location>
</feature>
<feature type="helix" evidence="7">
    <location>
        <begin position="45"/>
        <end position="55"/>
    </location>
</feature>
<feature type="strand" evidence="7">
    <location>
        <begin position="61"/>
        <end position="70"/>
    </location>
</feature>
<feature type="helix" evidence="7">
    <location>
        <begin position="71"/>
        <end position="82"/>
    </location>
</feature>
<feature type="strand" evidence="7">
    <location>
        <begin position="86"/>
        <end position="93"/>
    </location>
</feature>
<feature type="turn" evidence="7">
    <location>
        <begin position="94"/>
        <end position="96"/>
    </location>
</feature>
<feature type="strand" evidence="7">
    <location>
        <begin position="101"/>
        <end position="103"/>
    </location>
</feature>
<dbReference type="EC" id="2.8.1.1"/>
<dbReference type="EMBL" id="X57560">
    <property type="protein sequence ID" value="CAA40793.1"/>
    <property type="molecule type" value="Genomic_DNA"/>
</dbReference>
<dbReference type="EMBL" id="U00096">
    <property type="protein sequence ID" value="AAC74390.1"/>
    <property type="molecule type" value="Genomic_DNA"/>
</dbReference>
<dbReference type="EMBL" id="AP009048">
    <property type="protein sequence ID" value="BAA14877.1"/>
    <property type="molecule type" value="Genomic_DNA"/>
</dbReference>
<dbReference type="PIR" id="S17125">
    <property type="entry name" value="S17125"/>
</dbReference>
<dbReference type="RefSeq" id="NP_415824.1">
    <property type="nucleotide sequence ID" value="NC_000913.3"/>
</dbReference>
<dbReference type="RefSeq" id="WP_000473109.1">
    <property type="nucleotide sequence ID" value="NZ_STEB01000005.1"/>
</dbReference>
<dbReference type="PDB" id="2JTQ">
    <property type="method" value="NMR"/>
    <property type="chains" value="A=20-104"/>
</dbReference>
<dbReference type="PDB" id="2JTR">
    <property type="method" value="NMR"/>
    <property type="chains" value="A=20-104"/>
</dbReference>
<dbReference type="PDB" id="2JTS">
    <property type="method" value="NMR"/>
    <property type="chains" value="A=20-104"/>
</dbReference>
<dbReference type="PDBsum" id="2JTQ"/>
<dbReference type="PDBsum" id="2JTR"/>
<dbReference type="PDBsum" id="2JTS"/>
<dbReference type="SMR" id="P23857"/>
<dbReference type="BioGRID" id="4263234">
    <property type="interactions" value="412"/>
</dbReference>
<dbReference type="BioGRID" id="850024">
    <property type="interactions" value="1"/>
</dbReference>
<dbReference type="DIP" id="DIP-10591N"/>
<dbReference type="FunCoup" id="P23857">
    <property type="interactions" value="91"/>
</dbReference>
<dbReference type="IntAct" id="P23857">
    <property type="interactions" value="3"/>
</dbReference>
<dbReference type="STRING" id="511145.b1308"/>
<dbReference type="jPOST" id="P23857"/>
<dbReference type="PaxDb" id="511145-b1308"/>
<dbReference type="EnsemblBacteria" id="AAC74390">
    <property type="protein sequence ID" value="AAC74390"/>
    <property type="gene ID" value="b1308"/>
</dbReference>
<dbReference type="GeneID" id="93775434"/>
<dbReference type="GeneID" id="945652"/>
<dbReference type="KEGG" id="ecj:JW1301"/>
<dbReference type="KEGG" id="eco:b1308"/>
<dbReference type="KEGG" id="ecoc:C3026_07670"/>
<dbReference type="PATRIC" id="fig|1411691.4.peg.971"/>
<dbReference type="EchoBASE" id="EB0773"/>
<dbReference type="eggNOG" id="COG0607">
    <property type="taxonomic scope" value="Bacteria"/>
</dbReference>
<dbReference type="HOGENOM" id="CLU_089574_15_1_6"/>
<dbReference type="InParanoid" id="P23857"/>
<dbReference type="OMA" id="GNYEELH"/>
<dbReference type="OrthoDB" id="9814704at2"/>
<dbReference type="PhylomeDB" id="P23857"/>
<dbReference type="BioCyc" id="EcoCyc:EG10780-MONOMER"/>
<dbReference type="BioCyc" id="MetaCyc:EG10780-MONOMER"/>
<dbReference type="SABIO-RK" id="P23857"/>
<dbReference type="EvolutionaryTrace" id="P23857"/>
<dbReference type="PRO" id="PR:P23857"/>
<dbReference type="Proteomes" id="UP000000625">
    <property type="component" value="Chromosome"/>
</dbReference>
<dbReference type="GO" id="GO:0030288">
    <property type="term" value="C:outer membrane-bounded periplasmic space"/>
    <property type="evidence" value="ECO:0000314"/>
    <property type="project" value="EcoCyc"/>
</dbReference>
<dbReference type="GO" id="GO:0042597">
    <property type="term" value="C:periplasmic space"/>
    <property type="evidence" value="ECO:0000314"/>
    <property type="project" value="EcoCyc"/>
</dbReference>
<dbReference type="GO" id="GO:0004792">
    <property type="term" value="F:thiosulfate-cyanide sulfurtransferase activity"/>
    <property type="evidence" value="ECO:0000314"/>
    <property type="project" value="EcoCyc"/>
</dbReference>
<dbReference type="CDD" id="cd00158">
    <property type="entry name" value="RHOD"/>
    <property type="match status" value="1"/>
</dbReference>
<dbReference type="FunFam" id="3.40.250.10:FF:000010">
    <property type="entry name" value="Phage shock protein PspE"/>
    <property type="match status" value="1"/>
</dbReference>
<dbReference type="Gene3D" id="3.40.250.10">
    <property type="entry name" value="Rhodanese-like domain"/>
    <property type="match status" value="1"/>
</dbReference>
<dbReference type="InterPro" id="IPR014323">
    <property type="entry name" value="PspE"/>
</dbReference>
<dbReference type="InterPro" id="IPR001763">
    <property type="entry name" value="Rhodanese-like_dom"/>
</dbReference>
<dbReference type="InterPro" id="IPR036873">
    <property type="entry name" value="Rhodanese-like_dom_sf"/>
</dbReference>
<dbReference type="InterPro" id="IPR052367">
    <property type="entry name" value="Thiosulfate_ST/Rhodanese-like"/>
</dbReference>
<dbReference type="NCBIfam" id="TIGR02981">
    <property type="entry name" value="phageshock_pspE"/>
    <property type="match status" value="1"/>
</dbReference>
<dbReference type="NCBIfam" id="NF007627">
    <property type="entry name" value="PRK10287.1"/>
    <property type="match status" value="1"/>
</dbReference>
<dbReference type="PANTHER" id="PTHR45431">
    <property type="entry name" value="RHODANESE-LIKE DOMAIN-CONTAINING PROTEIN 15, CHLOROPLASTIC"/>
    <property type="match status" value="1"/>
</dbReference>
<dbReference type="PANTHER" id="PTHR45431:SF3">
    <property type="entry name" value="RHODANESE-LIKE DOMAIN-CONTAINING PROTEIN 15, CHLOROPLASTIC"/>
    <property type="match status" value="1"/>
</dbReference>
<dbReference type="Pfam" id="PF00581">
    <property type="entry name" value="Rhodanese"/>
    <property type="match status" value="1"/>
</dbReference>
<dbReference type="SMART" id="SM00450">
    <property type="entry name" value="RHOD"/>
    <property type="match status" value="1"/>
</dbReference>
<dbReference type="SUPFAM" id="SSF52821">
    <property type="entry name" value="Rhodanese/Cell cycle control phosphatase"/>
    <property type="match status" value="1"/>
</dbReference>
<dbReference type="PROSITE" id="PS50206">
    <property type="entry name" value="RHODANESE_3"/>
    <property type="match status" value="1"/>
</dbReference>
<proteinExistence type="evidence at protein level"/>
<accession>P23857</accession>
<organism>
    <name type="scientific">Escherichia coli (strain K12)</name>
    <dbReference type="NCBI Taxonomy" id="83333"/>
    <lineage>
        <taxon>Bacteria</taxon>
        <taxon>Pseudomonadati</taxon>
        <taxon>Pseudomonadota</taxon>
        <taxon>Gammaproteobacteria</taxon>
        <taxon>Enterobacterales</taxon>
        <taxon>Enterobacteriaceae</taxon>
        <taxon>Escherichia</taxon>
    </lineage>
</organism>
<protein>
    <recommendedName>
        <fullName>Thiosulfate sulfurtransferase PspE</fullName>
        <shortName>TST</shortName>
        <ecNumber>2.8.1.1</ecNumber>
    </recommendedName>
    <alternativeName>
        <fullName>Phage shock protein E</fullName>
    </alternativeName>
</protein>
<reference key="1">
    <citation type="journal article" date="1991" name="J. Mol. Biol.">
        <title>Characterization and sequence of the Escherichia coli stress-induced psp operon.</title>
        <authorList>
            <person name="Brissette J.L."/>
            <person name="Weiner L."/>
            <person name="Ripmaster T.L."/>
            <person name="Model P."/>
        </authorList>
    </citation>
    <scope>NUCLEOTIDE SEQUENCE [GENOMIC DNA]</scope>
    <scope>SUBCELLULAR LOCATION</scope>
    <scope>INDUCTION</scope>
    <source>
        <strain>K12</strain>
    </source>
</reference>
<reference key="2">
    <citation type="journal article" date="1996" name="DNA Res.">
        <title>A 570-kb DNA sequence of the Escherichia coli K-12 genome corresponding to the 28.0-40.1 min region on the linkage map.</title>
        <authorList>
            <person name="Aiba H."/>
            <person name="Baba T."/>
            <person name="Fujita K."/>
            <person name="Hayashi K."/>
            <person name="Inada T."/>
            <person name="Isono K."/>
            <person name="Itoh T."/>
            <person name="Kasai H."/>
            <person name="Kashimoto K."/>
            <person name="Kimura S."/>
            <person name="Kitakawa M."/>
            <person name="Kitagawa M."/>
            <person name="Makino K."/>
            <person name="Miki T."/>
            <person name="Mizobuchi K."/>
            <person name="Mori H."/>
            <person name="Mori T."/>
            <person name="Motomura K."/>
            <person name="Nakade S."/>
            <person name="Nakamura Y."/>
            <person name="Nashimoto H."/>
            <person name="Nishio Y."/>
            <person name="Oshima T."/>
            <person name="Saito N."/>
            <person name="Sampei G."/>
            <person name="Seki Y."/>
            <person name="Sivasundaram S."/>
            <person name="Tagami H."/>
            <person name="Takeda J."/>
            <person name="Takemoto K."/>
            <person name="Takeuchi Y."/>
            <person name="Wada C."/>
            <person name="Yamamoto Y."/>
            <person name="Horiuchi T."/>
        </authorList>
    </citation>
    <scope>NUCLEOTIDE SEQUENCE [LARGE SCALE GENOMIC DNA]</scope>
    <source>
        <strain>K12 / W3110 / ATCC 27325 / DSM 5911</strain>
    </source>
</reference>
<reference key="3">
    <citation type="journal article" date="1997" name="Science">
        <title>The complete genome sequence of Escherichia coli K-12.</title>
        <authorList>
            <person name="Blattner F.R."/>
            <person name="Plunkett G. III"/>
            <person name="Bloch C.A."/>
            <person name="Perna N.T."/>
            <person name="Burland V."/>
            <person name="Riley M."/>
            <person name="Collado-Vides J."/>
            <person name="Glasner J.D."/>
            <person name="Rode C.K."/>
            <person name="Mayhew G.F."/>
            <person name="Gregor J."/>
            <person name="Davis N.W."/>
            <person name="Kirkpatrick H.A."/>
            <person name="Goeden M.A."/>
            <person name="Rose D.J."/>
            <person name="Mau B."/>
            <person name="Shao Y."/>
        </authorList>
    </citation>
    <scope>NUCLEOTIDE SEQUENCE [LARGE SCALE GENOMIC DNA]</scope>
    <source>
        <strain>K12 / MG1655 / ATCC 47076</strain>
    </source>
</reference>
<reference key="4">
    <citation type="journal article" date="2006" name="Mol. Syst. Biol.">
        <title>Highly accurate genome sequences of Escherichia coli K-12 strains MG1655 and W3110.</title>
        <authorList>
            <person name="Hayashi K."/>
            <person name="Morooka N."/>
            <person name="Yamamoto Y."/>
            <person name="Fujita K."/>
            <person name="Isono K."/>
            <person name="Choi S."/>
            <person name="Ohtsubo E."/>
            <person name="Baba T."/>
            <person name="Wanner B.L."/>
            <person name="Mori H."/>
            <person name="Horiuchi T."/>
        </authorList>
    </citation>
    <scope>NUCLEOTIDE SEQUENCE [LARGE SCALE GENOMIC DNA]</scope>
    <source>
        <strain>K12 / W3110 / ATCC 27325 / DSM 5911</strain>
    </source>
</reference>
<reference key="5">
    <citation type="journal article" date="1998" name="FEMS Microbiol. Lett.">
        <title>Small genes/gene-products in Escherichia coli K-12.</title>
        <authorList>
            <person name="Wasinger V.C."/>
            <person name="Humphery-Smith I."/>
        </authorList>
    </citation>
    <scope>PROTEIN SEQUENCE OF 20-29</scope>
    <source>
        <strain>K12</strain>
    </source>
</reference>
<reference key="6">
    <citation type="journal article" date="2002" name="FEBS Lett.">
        <title>PspE (phage-shock protein E) of Escherichia coli is a rhodanese.</title>
        <authorList>
            <person name="Adams H."/>
            <person name="Teertstra W."/>
            <person name="Koster M."/>
            <person name="Tommassen J."/>
        </authorList>
    </citation>
    <scope>CATALYTIC ACTIVITY</scope>
    <scope>ACTIVITY REGULATION</scope>
    <scope>INDUCTION</scope>
    <scope>BIOPHYSICOCHEMICAL PROPERTIES</scope>
</reference>
<reference key="7">
    <citation type="journal article" date="2008" name="Open Microbiol. J.">
        <title>Biochemical and genetic characterization of pspE and glpE, two single-domain sulfurtransferases of Escherichia coli.</title>
        <authorList>
            <person name="Cheng H."/>
            <person name="Donahue J.L."/>
            <person name="Battle S.E."/>
            <person name="Ray W.K."/>
            <person name="Larson T.J."/>
        </authorList>
    </citation>
    <scope>BIOPHYSICOCHEMICAL PROPERTIES</scope>
    <scope>REACTION MECHANISM</scope>
    <scope>SUBSTRATE SPECIFICITY</scope>
    <scope>INDUCTION</scope>
    <scope>ACTIVITY REGULATION</scope>
    <source>
        <strain>K12 / MG1655 / ATCC 47076</strain>
    </source>
</reference>
<reference key="8">
    <citation type="journal article" date="2008" name="Biochemistry">
        <title>Solution structures and backbone dynamics of Escherichia coli rhodanese PspE in its sulfur-free and persulfide-intermediate forms: implications for the catalytic mechanism of rhodanese.</title>
        <authorList>
            <person name="Li H."/>
            <person name="Yang F."/>
            <person name="Kang X."/>
            <person name="Xia B."/>
            <person name="Jin C."/>
        </authorList>
    </citation>
    <scope>STRUCTURE BY NMR</scope>
    <scope>SUBUNIT</scope>
</reference>
<sequence length="104" mass="11475">MFKKGLLALALVFSLPVFAAEHWIDVRVPEQYQQEHVQGAINIPLKEVKERIATAVPDKNDTVKVYCNAGRQSGQAKEILSEMGYTHVENAGGLKDIAMPKVKG</sequence>
<gene>
    <name type="primary">pspE</name>
    <name type="ordered locus">b1308</name>
    <name type="ordered locus">JW1301</name>
</gene>
<keyword id="KW-0002">3D-structure</keyword>
<keyword id="KW-0903">Direct protein sequencing</keyword>
<keyword id="KW-0574">Periplasm</keyword>
<keyword id="KW-1185">Reference proteome</keyword>
<keyword id="KW-0732">Signal</keyword>
<keyword id="KW-0346">Stress response</keyword>
<keyword id="KW-0808">Transferase</keyword>